<keyword id="KW-0012">Acyltransferase</keyword>
<keyword id="KW-0963">Cytoplasm</keyword>
<keyword id="KW-0808">Transferase</keyword>
<gene>
    <name evidence="1" type="primary">aat</name>
    <name type="ordered locus">Shal_1724</name>
</gene>
<evidence type="ECO:0000255" key="1">
    <source>
        <dbReference type="HAMAP-Rule" id="MF_00688"/>
    </source>
</evidence>
<sequence length="236" mass="26524">MNSLSYLNHDQQGFPPPEQALSDPNGLLAVGGDLRPERLLNAYYNGIFPWFNLDDPILWWSPDPRAVFVPGNMKISRSLVKYLKKQDWTYTINHNFEAVTAGCAEPRAGQDGTWISSEIQQAYLSLHQQGYAHSLEVWQDKQLIGGLYGLAIGQVFCGESMFHRATNASKAAMIVLQQHLQRCGFKLIDAQVVNPHLDSLGAKSIKRDDFLRLLTHLRDGEVSIDSWSKAEVSIEL</sequence>
<reference key="1">
    <citation type="submission" date="2008-01" db="EMBL/GenBank/DDBJ databases">
        <title>Complete sequence of Shewanella halifaxensis HAW-EB4.</title>
        <authorList>
            <consortium name="US DOE Joint Genome Institute"/>
            <person name="Copeland A."/>
            <person name="Lucas S."/>
            <person name="Lapidus A."/>
            <person name="Glavina del Rio T."/>
            <person name="Dalin E."/>
            <person name="Tice H."/>
            <person name="Bruce D."/>
            <person name="Goodwin L."/>
            <person name="Pitluck S."/>
            <person name="Sims D."/>
            <person name="Brettin T."/>
            <person name="Detter J.C."/>
            <person name="Han C."/>
            <person name="Kuske C.R."/>
            <person name="Schmutz J."/>
            <person name="Larimer F."/>
            <person name="Land M."/>
            <person name="Hauser L."/>
            <person name="Kyrpides N."/>
            <person name="Kim E."/>
            <person name="Zhao J.-S."/>
            <person name="Richardson P."/>
        </authorList>
    </citation>
    <scope>NUCLEOTIDE SEQUENCE [LARGE SCALE GENOMIC DNA]</scope>
    <source>
        <strain>HAW-EB4</strain>
    </source>
</reference>
<proteinExistence type="inferred from homology"/>
<protein>
    <recommendedName>
        <fullName evidence="1">Leucyl/phenylalanyl-tRNA--protein transferase</fullName>
        <ecNumber evidence="1">2.3.2.6</ecNumber>
    </recommendedName>
    <alternativeName>
        <fullName evidence="1">L/F-transferase</fullName>
    </alternativeName>
    <alternativeName>
        <fullName evidence="1">Leucyltransferase</fullName>
    </alternativeName>
    <alternativeName>
        <fullName evidence="1">Phenyalanyltransferase</fullName>
    </alternativeName>
</protein>
<accession>B0TQ11</accession>
<feature type="chain" id="PRO_1000083102" description="Leucyl/phenylalanyl-tRNA--protein transferase">
    <location>
        <begin position="1"/>
        <end position="236"/>
    </location>
</feature>
<name>LFTR_SHEHH</name>
<comment type="function">
    <text evidence="1">Functions in the N-end rule pathway of protein degradation where it conjugates Leu, Phe and, less efficiently, Met from aminoacyl-tRNAs to the N-termini of proteins containing an N-terminal arginine or lysine.</text>
</comment>
<comment type="catalytic activity">
    <reaction evidence="1">
        <text>N-terminal L-lysyl-[protein] + L-leucyl-tRNA(Leu) = N-terminal L-leucyl-L-lysyl-[protein] + tRNA(Leu) + H(+)</text>
        <dbReference type="Rhea" id="RHEA:12340"/>
        <dbReference type="Rhea" id="RHEA-COMP:9613"/>
        <dbReference type="Rhea" id="RHEA-COMP:9622"/>
        <dbReference type="Rhea" id="RHEA-COMP:12670"/>
        <dbReference type="Rhea" id="RHEA-COMP:12671"/>
        <dbReference type="ChEBI" id="CHEBI:15378"/>
        <dbReference type="ChEBI" id="CHEBI:65249"/>
        <dbReference type="ChEBI" id="CHEBI:78442"/>
        <dbReference type="ChEBI" id="CHEBI:78494"/>
        <dbReference type="ChEBI" id="CHEBI:133043"/>
        <dbReference type="EC" id="2.3.2.6"/>
    </reaction>
</comment>
<comment type="catalytic activity">
    <reaction evidence="1">
        <text>N-terminal L-arginyl-[protein] + L-leucyl-tRNA(Leu) = N-terminal L-leucyl-L-arginyl-[protein] + tRNA(Leu) + H(+)</text>
        <dbReference type="Rhea" id="RHEA:50416"/>
        <dbReference type="Rhea" id="RHEA-COMP:9613"/>
        <dbReference type="Rhea" id="RHEA-COMP:9622"/>
        <dbReference type="Rhea" id="RHEA-COMP:12672"/>
        <dbReference type="Rhea" id="RHEA-COMP:12673"/>
        <dbReference type="ChEBI" id="CHEBI:15378"/>
        <dbReference type="ChEBI" id="CHEBI:64719"/>
        <dbReference type="ChEBI" id="CHEBI:78442"/>
        <dbReference type="ChEBI" id="CHEBI:78494"/>
        <dbReference type="ChEBI" id="CHEBI:133044"/>
        <dbReference type="EC" id="2.3.2.6"/>
    </reaction>
</comment>
<comment type="catalytic activity">
    <reaction evidence="1">
        <text>L-phenylalanyl-tRNA(Phe) + an N-terminal L-alpha-aminoacyl-[protein] = an N-terminal L-phenylalanyl-L-alpha-aminoacyl-[protein] + tRNA(Phe)</text>
        <dbReference type="Rhea" id="RHEA:43632"/>
        <dbReference type="Rhea" id="RHEA-COMP:9668"/>
        <dbReference type="Rhea" id="RHEA-COMP:9699"/>
        <dbReference type="Rhea" id="RHEA-COMP:10636"/>
        <dbReference type="Rhea" id="RHEA-COMP:10637"/>
        <dbReference type="ChEBI" id="CHEBI:78442"/>
        <dbReference type="ChEBI" id="CHEBI:78531"/>
        <dbReference type="ChEBI" id="CHEBI:78597"/>
        <dbReference type="ChEBI" id="CHEBI:83561"/>
        <dbReference type="EC" id="2.3.2.6"/>
    </reaction>
</comment>
<comment type="subcellular location">
    <subcellularLocation>
        <location evidence="1">Cytoplasm</location>
    </subcellularLocation>
</comment>
<comment type="similarity">
    <text evidence="1">Belongs to the L/F-transferase family.</text>
</comment>
<organism>
    <name type="scientific">Shewanella halifaxensis (strain HAW-EB4)</name>
    <dbReference type="NCBI Taxonomy" id="458817"/>
    <lineage>
        <taxon>Bacteria</taxon>
        <taxon>Pseudomonadati</taxon>
        <taxon>Pseudomonadota</taxon>
        <taxon>Gammaproteobacteria</taxon>
        <taxon>Alteromonadales</taxon>
        <taxon>Shewanellaceae</taxon>
        <taxon>Shewanella</taxon>
    </lineage>
</organism>
<dbReference type="EC" id="2.3.2.6" evidence="1"/>
<dbReference type="EMBL" id="CP000931">
    <property type="protein sequence ID" value="ABZ76290.1"/>
    <property type="molecule type" value="Genomic_DNA"/>
</dbReference>
<dbReference type="RefSeq" id="WP_012276825.1">
    <property type="nucleotide sequence ID" value="NC_010334.1"/>
</dbReference>
<dbReference type="SMR" id="B0TQ11"/>
<dbReference type="STRING" id="458817.Shal_1724"/>
<dbReference type="KEGG" id="shl:Shal_1724"/>
<dbReference type="eggNOG" id="COG2360">
    <property type="taxonomic scope" value="Bacteria"/>
</dbReference>
<dbReference type="HOGENOM" id="CLU_075045_0_0_6"/>
<dbReference type="OrthoDB" id="9790282at2"/>
<dbReference type="Proteomes" id="UP000001317">
    <property type="component" value="Chromosome"/>
</dbReference>
<dbReference type="GO" id="GO:0005737">
    <property type="term" value="C:cytoplasm"/>
    <property type="evidence" value="ECO:0007669"/>
    <property type="project" value="UniProtKB-SubCell"/>
</dbReference>
<dbReference type="GO" id="GO:0008914">
    <property type="term" value="F:leucyl-tRNA--protein transferase activity"/>
    <property type="evidence" value="ECO:0007669"/>
    <property type="project" value="UniProtKB-UniRule"/>
</dbReference>
<dbReference type="GO" id="GO:0030163">
    <property type="term" value="P:protein catabolic process"/>
    <property type="evidence" value="ECO:0007669"/>
    <property type="project" value="UniProtKB-UniRule"/>
</dbReference>
<dbReference type="FunFam" id="3.30.70.3550:FF:000001">
    <property type="entry name" value="Leucyl/phenylalanyl-tRNA--protein transferase"/>
    <property type="match status" value="1"/>
</dbReference>
<dbReference type="FunFam" id="3.40.630.70:FF:000001">
    <property type="entry name" value="Leucyl/phenylalanyl-tRNA--protein transferase"/>
    <property type="match status" value="1"/>
</dbReference>
<dbReference type="Gene3D" id="3.40.630.70">
    <property type="entry name" value="Leucyl/phenylalanyl-tRNA-protein transferase, C-terminal domain"/>
    <property type="match status" value="1"/>
</dbReference>
<dbReference type="Gene3D" id="3.30.70.3550">
    <property type="entry name" value="Leucyl/phenylalanyl-tRNA-protein transferase, N-terminal domain"/>
    <property type="match status" value="1"/>
</dbReference>
<dbReference type="HAMAP" id="MF_00688">
    <property type="entry name" value="Leu_Phe_trans"/>
    <property type="match status" value="1"/>
</dbReference>
<dbReference type="InterPro" id="IPR016181">
    <property type="entry name" value="Acyl_CoA_acyltransferase"/>
</dbReference>
<dbReference type="InterPro" id="IPR004616">
    <property type="entry name" value="Leu/Phe-tRNA_Trfase"/>
</dbReference>
<dbReference type="InterPro" id="IPR042203">
    <property type="entry name" value="Leu/Phe-tRNA_Trfase_C"/>
</dbReference>
<dbReference type="InterPro" id="IPR042221">
    <property type="entry name" value="Leu/Phe-tRNA_Trfase_N"/>
</dbReference>
<dbReference type="NCBIfam" id="TIGR00667">
    <property type="entry name" value="aat"/>
    <property type="match status" value="1"/>
</dbReference>
<dbReference type="PANTHER" id="PTHR30098">
    <property type="entry name" value="LEUCYL/PHENYLALANYL-TRNA--PROTEIN TRANSFERASE"/>
    <property type="match status" value="1"/>
</dbReference>
<dbReference type="PANTHER" id="PTHR30098:SF2">
    <property type="entry name" value="LEUCYL_PHENYLALANYL-TRNA--PROTEIN TRANSFERASE"/>
    <property type="match status" value="1"/>
</dbReference>
<dbReference type="Pfam" id="PF03588">
    <property type="entry name" value="Leu_Phe_trans"/>
    <property type="match status" value="1"/>
</dbReference>
<dbReference type="SUPFAM" id="SSF55729">
    <property type="entry name" value="Acyl-CoA N-acyltransferases (Nat)"/>
    <property type="match status" value="1"/>
</dbReference>